<gene>
    <name evidence="8" type="primary">Pdlim5</name>
    <name evidence="6" type="synonym">Enh</name>
</gene>
<accession>Q8CI51</accession>
<accession>Q3UGD0</accession>
<accession>Q9QYN0</accession>
<accession>Q9QYN1</accession>
<accession>Q9QYN2</accession>
<dbReference type="EMBL" id="AB016586">
    <property type="protein sequence ID" value="BAA88827.1"/>
    <property type="molecule type" value="mRNA"/>
</dbReference>
<dbReference type="EMBL" id="AB016587">
    <property type="protein sequence ID" value="BAA88828.1"/>
    <property type="molecule type" value="mRNA"/>
</dbReference>
<dbReference type="EMBL" id="AB016588">
    <property type="protein sequence ID" value="BAA88829.1"/>
    <property type="molecule type" value="mRNA"/>
</dbReference>
<dbReference type="EMBL" id="AK147999">
    <property type="protein sequence ID" value="BAE28279.1"/>
    <property type="molecule type" value="mRNA"/>
</dbReference>
<dbReference type="EMBL" id="BC037476">
    <property type="protein sequence ID" value="AAH37476.1"/>
    <property type="molecule type" value="mRNA"/>
</dbReference>
<dbReference type="CCDS" id="CCDS17875.1">
    <molecule id="Q8CI51-1"/>
</dbReference>
<dbReference type="CCDS" id="CCDS17876.1">
    <molecule id="Q8CI51-2"/>
</dbReference>
<dbReference type="CCDS" id="CCDS38656.1">
    <molecule id="Q8CI51-3"/>
</dbReference>
<dbReference type="RefSeq" id="NP_001177781.1">
    <property type="nucleotide sequence ID" value="NM_001190852.1"/>
</dbReference>
<dbReference type="RefSeq" id="NP_001177783.1">
    <property type="nucleotide sequence ID" value="NM_001190854.1"/>
</dbReference>
<dbReference type="RefSeq" id="NP_001177784.1">
    <property type="nucleotide sequence ID" value="NM_001190855.1"/>
</dbReference>
<dbReference type="RefSeq" id="NP_001177785.1">
    <property type="nucleotide sequence ID" value="NM_001190856.1"/>
</dbReference>
<dbReference type="RefSeq" id="NP_062782.2">
    <molecule id="Q8CI51-1"/>
    <property type="nucleotide sequence ID" value="NM_019808.4"/>
</dbReference>
<dbReference type="RefSeq" id="NP_062783.2">
    <molecule id="Q8CI51-2"/>
    <property type="nucleotide sequence ID" value="NM_019809.4"/>
</dbReference>
<dbReference type="PDB" id="1WF7">
    <property type="method" value="NMR"/>
    <property type="chains" value="A=5-94"/>
</dbReference>
<dbReference type="PDBsum" id="1WF7"/>
<dbReference type="BMRB" id="Q8CI51"/>
<dbReference type="SMR" id="Q8CI51"/>
<dbReference type="BioGRID" id="207938">
    <property type="interactions" value="109"/>
</dbReference>
<dbReference type="CORUM" id="Q8CI51"/>
<dbReference type="FunCoup" id="Q8CI51">
    <property type="interactions" value="533"/>
</dbReference>
<dbReference type="IntAct" id="Q8CI51">
    <property type="interactions" value="26"/>
</dbReference>
<dbReference type="MINT" id="Q8CI51"/>
<dbReference type="GlyGen" id="Q8CI51">
    <property type="glycosylation" value="9 sites, 1 O-linked glycan (8 sites)"/>
</dbReference>
<dbReference type="iPTMnet" id="Q8CI51"/>
<dbReference type="PhosphoSitePlus" id="Q8CI51"/>
<dbReference type="SwissPalm" id="Q8CI51"/>
<dbReference type="jPOST" id="Q8CI51"/>
<dbReference type="PaxDb" id="10090-ENSMUSP00000029941"/>
<dbReference type="PeptideAtlas" id="Q8CI51"/>
<dbReference type="ProteomicsDB" id="288087">
    <molecule id="Q8CI51-1"/>
</dbReference>
<dbReference type="ProteomicsDB" id="288088">
    <molecule id="Q8CI51-2"/>
</dbReference>
<dbReference type="ProteomicsDB" id="288089">
    <molecule id="Q8CI51-3"/>
</dbReference>
<dbReference type="Pumba" id="Q8CI51"/>
<dbReference type="Antibodypedia" id="4614">
    <property type="antibodies" value="410 antibodies from 30 providers"/>
</dbReference>
<dbReference type="DNASU" id="56376"/>
<dbReference type="Ensembl" id="ENSMUST00000029941.16">
    <molecule id="Q8CI51-1"/>
    <property type="protein sequence ID" value="ENSMUSP00000029941.10"/>
    <property type="gene ID" value="ENSMUSG00000028273.17"/>
</dbReference>
<dbReference type="Ensembl" id="ENSMUST00000196908.5">
    <molecule id="Q8CI51-2"/>
    <property type="protein sequence ID" value="ENSMUSP00000143098.2"/>
    <property type="gene ID" value="ENSMUSG00000028273.17"/>
</dbReference>
<dbReference type="GeneID" id="56376"/>
<dbReference type="KEGG" id="mmu:56376"/>
<dbReference type="UCSC" id="uc008rol.2">
    <molecule id="Q8CI51-1"/>
    <property type="organism name" value="mouse"/>
</dbReference>
<dbReference type="UCSC" id="uc008ron.2">
    <molecule id="Q8CI51-2"/>
    <property type="organism name" value="mouse"/>
</dbReference>
<dbReference type="AGR" id="MGI:1927489"/>
<dbReference type="CTD" id="10611"/>
<dbReference type="MGI" id="MGI:1927489">
    <property type="gene designation" value="Pdlim5"/>
</dbReference>
<dbReference type="VEuPathDB" id="HostDB:ENSMUSG00000028273"/>
<dbReference type="eggNOG" id="KOG1703">
    <property type="taxonomic scope" value="Eukaryota"/>
</dbReference>
<dbReference type="GeneTree" id="ENSGT00940000155292"/>
<dbReference type="HOGENOM" id="CLU_038114_0_1_1"/>
<dbReference type="InParanoid" id="Q8CI51"/>
<dbReference type="OMA" id="ITGTEHX"/>
<dbReference type="OrthoDB" id="5911912at2759"/>
<dbReference type="PhylomeDB" id="Q8CI51"/>
<dbReference type="TreeFam" id="TF106408"/>
<dbReference type="BioGRID-ORCS" id="56376">
    <property type="hits" value="1 hit in 77 CRISPR screens"/>
</dbReference>
<dbReference type="EvolutionaryTrace" id="Q8CI51"/>
<dbReference type="PRO" id="PR:Q8CI51"/>
<dbReference type="Proteomes" id="UP000000589">
    <property type="component" value="Chromosome 3"/>
</dbReference>
<dbReference type="RNAct" id="Q8CI51">
    <property type="molecule type" value="protein"/>
</dbReference>
<dbReference type="Bgee" id="ENSMUSG00000028273">
    <property type="expression patterns" value="Expressed in soleus muscle and 263 other cell types or tissues"/>
</dbReference>
<dbReference type="ExpressionAtlas" id="Q8CI51">
    <property type="expression patterns" value="baseline and differential"/>
</dbReference>
<dbReference type="GO" id="GO:0042995">
    <property type="term" value="C:cell projection"/>
    <property type="evidence" value="ECO:0007669"/>
    <property type="project" value="UniProtKB-KW"/>
</dbReference>
<dbReference type="GO" id="GO:0005829">
    <property type="term" value="C:cytosol"/>
    <property type="evidence" value="ECO:0000250"/>
    <property type="project" value="UniProtKB"/>
</dbReference>
<dbReference type="GO" id="GO:0014069">
    <property type="term" value="C:postsynaptic density"/>
    <property type="evidence" value="ECO:0000250"/>
    <property type="project" value="UniProtKB"/>
</dbReference>
<dbReference type="GO" id="GO:0098793">
    <property type="term" value="C:presynapse"/>
    <property type="evidence" value="ECO:0007669"/>
    <property type="project" value="UniProtKB-SubCell"/>
</dbReference>
<dbReference type="GO" id="GO:0030018">
    <property type="term" value="C:Z disc"/>
    <property type="evidence" value="ECO:0000314"/>
    <property type="project" value="MGI"/>
</dbReference>
<dbReference type="GO" id="GO:0046872">
    <property type="term" value="F:metal ion binding"/>
    <property type="evidence" value="ECO:0007669"/>
    <property type="project" value="UniProtKB-KW"/>
</dbReference>
<dbReference type="GO" id="GO:0061001">
    <property type="term" value="P:regulation of dendritic spine morphogenesis"/>
    <property type="evidence" value="ECO:0000250"/>
    <property type="project" value="UniProtKB"/>
</dbReference>
<dbReference type="GO" id="GO:0051963">
    <property type="term" value="P:regulation of synapse assembly"/>
    <property type="evidence" value="ECO:0000250"/>
    <property type="project" value="UniProtKB"/>
</dbReference>
<dbReference type="CDD" id="cd09453">
    <property type="entry name" value="LIM1_ENH"/>
    <property type="match status" value="1"/>
</dbReference>
<dbReference type="CDD" id="cd06753">
    <property type="entry name" value="PDZ_PDLIM-like"/>
    <property type="match status" value="1"/>
</dbReference>
<dbReference type="FunFam" id="2.30.42.10:FF:000019">
    <property type="entry name" value="LIM domain binding 3 isoform 1"/>
    <property type="match status" value="1"/>
</dbReference>
<dbReference type="FunFam" id="2.10.110.10:FF:000010">
    <property type="entry name" value="PDZ and LIM domain protein 5"/>
    <property type="match status" value="1"/>
</dbReference>
<dbReference type="FunFam" id="2.10.110.10:FF:000014">
    <property type="entry name" value="PDZ and LIM domain protein 5"/>
    <property type="match status" value="1"/>
</dbReference>
<dbReference type="FunFam" id="2.10.110.10:FF:000020">
    <property type="entry name" value="PDZ and LIM domain protein 5"/>
    <property type="match status" value="1"/>
</dbReference>
<dbReference type="Gene3D" id="2.30.42.10">
    <property type="match status" value="1"/>
</dbReference>
<dbReference type="Gene3D" id="2.10.110.10">
    <property type="entry name" value="Cysteine Rich Protein"/>
    <property type="match status" value="3"/>
</dbReference>
<dbReference type="InterPro" id="IPR001478">
    <property type="entry name" value="PDZ"/>
</dbReference>
<dbReference type="InterPro" id="IPR050604">
    <property type="entry name" value="PDZ-LIM_domain"/>
</dbReference>
<dbReference type="InterPro" id="IPR036034">
    <property type="entry name" value="PDZ_sf"/>
</dbReference>
<dbReference type="InterPro" id="IPR001781">
    <property type="entry name" value="Znf_LIM"/>
</dbReference>
<dbReference type="PANTHER" id="PTHR24214:SF32">
    <property type="entry name" value="PDZ AND LIM DOMAIN PROTEIN 5"/>
    <property type="match status" value="1"/>
</dbReference>
<dbReference type="PANTHER" id="PTHR24214">
    <property type="entry name" value="PDZ AND LIM DOMAIN PROTEIN ZASP"/>
    <property type="match status" value="1"/>
</dbReference>
<dbReference type="Pfam" id="PF00412">
    <property type="entry name" value="LIM"/>
    <property type="match status" value="3"/>
</dbReference>
<dbReference type="Pfam" id="PF00595">
    <property type="entry name" value="PDZ"/>
    <property type="match status" value="1"/>
</dbReference>
<dbReference type="SMART" id="SM00132">
    <property type="entry name" value="LIM"/>
    <property type="match status" value="3"/>
</dbReference>
<dbReference type="SMART" id="SM00228">
    <property type="entry name" value="PDZ"/>
    <property type="match status" value="1"/>
</dbReference>
<dbReference type="SUPFAM" id="SSF57716">
    <property type="entry name" value="Glucocorticoid receptor-like (DNA-binding domain)"/>
    <property type="match status" value="3"/>
</dbReference>
<dbReference type="SUPFAM" id="SSF50156">
    <property type="entry name" value="PDZ domain-like"/>
    <property type="match status" value="1"/>
</dbReference>
<dbReference type="PROSITE" id="PS00478">
    <property type="entry name" value="LIM_DOMAIN_1"/>
    <property type="match status" value="2"/>
</dbReference>
<dbReference type="PROSITE" id="PS50023">
    <property type="entry name" value="LIM_DOMAIN_2"/>
    <property type="match status" value="3"/>
</dbReference>
<dbReference type="PROSITE" id="PS50106">
    <property type="entry name" value="PDZ"/>
    <property type="match status" value="1"/>
</dbReference>
<organism>
    <name type="scientific">Mus musculus</name>
    <name type="common">Mouse</name>
    <dbReference type="NCBI Taxonomy" id="10090"/>
    <lineage>
        <taxon>Eukaryota</taxon>
        <taxon>Metazoa</taxon>
        <taxon>Chordata</taxon>
        <taxon>Craniata</taxon>
        <taxon>Vertebrata</taxon>
        <taxon>Euteleostomi</taxon>
        <taxon>Mammalia</taxon>
        <taxon>Eutheria</taxon>
        <taxon>Euarchontoglires</taxon>
        <taxon>Glires</taxon>
        <taxon>Rodentia</taxon>
        <taxon>Myomorpha</taxon>
        <taxon>Muroidea</taxon>
        <taxon>Muridae</taxon>
        <taxon>Murinae</taxon>
        <taxon>Mus</taxon>
        <taxon>Mus</taxon>
    </lineage>
</organism>
<reference key="1">
    <citation type="journal article" date="2000" name="Biochem. Biophys. Res. Commun.">
        <title>ENH, containing PDZ and LIM domains, heart/skeletal muscle-specific protein, associates with cytoskeletal proteins through the PDZ domain.</title>
        <authorList>
            <person name="Nakagawa N."/>
            <person name="Hoshijima M."/>
            <person name="Oyasu M."/>
            <person name="Saito N."/>
            <person name="Tanizawa K."/>
            <person name="Kuroda S."/>
        </authorList>
    </citation>
    <scope>NUCLEOTIDE SEQUENCE [MRNA] (ISOFORMS 1; 2 AND 3)</scope>
    <source>
        <strain>129/SvJ</strain>
    </source>
</reference>
<reference key="2">
    <citation type="journal article" date="2005" name="Science">
        <title>The transcriptional landscape of the mammalian genome.</title>
        <authorList>
            <person name="Carninci P."/>
            <person name="Kasukawa T."/>
            <person name="Katayama S."/>
            <person name="Gough J."/>
            <person name="Frith M.C."/>
            <person name="Maeda N."/>
            <person name="Oyama R."/>
            <person name="Ravasi T."/>
            <person name="Lenhard B."/>
            <person name="Wells C."/>
            <person name="Kodzius R."/>
            <person name="Shimokawa K."/>
            <person name="Bajic V.B."/>
            <person name="Brenner S.E."/>
            <person name="Batalov S."/>
            <person name="Forrest A.R."/>
            <person name="Zavolan M."/>
            <person name="Davis M.J."/>
            <person name="Wilming L.G."/>
            <person name="Aidinis V."/>
            <person name="Allen J.E."/>
            <person name="Ambesi-Impiombato A."/>
            <person name="Apweiler R."/>
            <person name="Aturaliya R.N."/>
            <person name="Bailey T.L."/>
            <person name="Bansal M."/>
            <person name="Baxter L."/>
            <person name="Beisel K.W."/>
            <person name="Bersano T."/>
            <person name="Bono H."/>
            <person name="Chalk A.M."/>
            <person name="Chiu K.P."/>
            <person name="Choudhary V."/>
            <person name="Christoffels A."/>
            <person name="Clutterbuck D.R."/>
            <person name="Crowe M.L."/>
            <person name="Dalla E."/>
            <person name="Dalrymple B.P."/>
            <person name="de Bono B."/>
            <person name="Della Gatta G."/>
            <person name="di Bernardo D."/>
            <person name="Down T."/>
            <person name="Engstrom P."/>
            <person name="Fagiolini M."/>
            <person name="Faulkner G."/>
            <person name="Fletcher C.F."/>
            <person name="Fukushima T."/>
            <person name="Furuno M."/>
            <person name="Futaki S."/>
            <person name="Gariboldi M."/>
            <person name="Georgii-Hemming P."/>
            <person name="Gingeras T.R."/>
            <person name="Gojobori T."/>
            <person name="Green R.E."/>
            <person name="Gustincich S."/>
            <person name="Harbers M."/>
            <person name="Hayashi Y."/>
            <person name="Hensch T.K."/>
            <person name="Hirokawa N."/>
            <person name="Hill D."/>
            <person name="Huminiecki L."/>
            <person name="Iacono M."/>
            <person name="Ikeo K."/>
            <person name="Iwama A."/>
            <person name="Ishikawa T."/>
            <person name="Jakt M."/>
            <person name="Kanapin A."/>
            <person name="Katoh M."/>
            <person name="Kawasawa Y."/>
            <person name="Kelso J."/>
            <person name="Kitamura H."/>
            <person name="Kitano H."/>
            <person name="Kollias G."/>
            <person name="Krishnan S.P."/>
            <person name="Kruger A."/>
            <person name="Kummerfeld S.K."/>
            <person name="Kurochkin I.V."/>
            <person name="Lareau L.F."/>
            <person name="Lazarevic D."/>
            <person name="Lipovich L."/>
            <person name="Liu J."/>
            <person name="Liuni S."/>
            <person name="McWilliam S."/>
            <person name="Madan Babu M."/>
            <person name="Madera M."/>
            <person name="Marchionni L."/>
            <person name="Matsuda H."/>
            <person name="Matsuzawa S."/>
            <person name="Miki H."/>
            <person name="Mignone F."/>
            <person name="Miyake S."/>
            <person name="Morris K."/>
            <person name="Mottagui-Tabar S."/>
            <person name="Mulder N."/>
            <person name="Nakano N."/>
            <person name="Nakauchi H."/>
            <person name="Ng P."/>
            <person name="Nilsson R."/>
            <person name="Nishiguchi S."/>
            <person name="Nishikawa S."/>
            <person name="Nori F."/>
            <person name="Ohara O."/>
            <person name="Okazaki Y."/>
            <person name="Orlando V."/>
            <person name="Pang K.C."/>
            <person name="Pavan W.J."/>
            <person name="Pavesi G."/>
            <person name="Pesole G."/>
            <person name="Petrovsky N."/>
            <person name="Piazza S."/>
            <person name="Reed J."/>
            <person name="Reid J.F."/>
            <person name="Ring B.Z."/>
            <person name="Ringwald M."/>
            <person name="Rost B."/>
            <person name="Ruan Y."/>
            <person name="Salzberg S.L."/>
            <person name="Sandelin A."/>
            <person name="Schneider C."/>
            <person name="Schoenbach C."/>
            <person name="Sekiguchi K."/>
            <person name="Semple C.A."/>
            <person name="Seno S."/>
            <person name="Sessa L."/>
            <person name="Sheng Y."/>
            <person name="Shibata Y."/>
            <person name="Shimada H."/>
            <person name="Shimada K."/>
            <person name="Silva D."/>
            <person name="Sinclair B."/>
            <person name="Sperling S."/>
            <person name="Stupka E."/>
            <person name="Sugiura K."/>
            <person name="Sultana R."/>
            <person name="Takenaka Y."/>
            <person name="Taki K."/>
            <person name="Tammoja K."/>
            <person name="Tan S.L."/>
            <person name="Tang S."/>
            <person name="Taylor M.S."/>
            <person name="Tegner J."/>
            <person name="Teichmann S.A."/>
            <person name="Ueda H.R."/>
            <person name="van Nimwegen E."/>
            <person name="Verardo R."/>
            <person name="Wei C.L."/>
            <person name="Yagi K."/>
            <person name="Yamanishi H."/>
            <person name="Zabarovsky E."/>
            <person name="Zhu S."/>
            <person name="Zimmer A."/>
            <person name="Hide W."/>
            <person name="Bult C."/>
            <person name="Grimmond S.M."/>
            <person name="Teasdale R.D."/>
            <person name="Liu E.T."/>
            <person name="Brusic V."/>
            <person name="Quackenbush J."/>
            <person name="Wahlestedt C."/>
            <person name="Mattick J.S."/>
            <person name="Hume D.A."/>
            <person name="Kai C."/>
            <person name="Sasaki D."/>
            <person name="Tomaru Y."/>
            <person name="Fukuda S."/>
            <person name="Kanamori-Katayama M."/>
            <person name="Suzuki M."/>
            <person name="Aoki J."/>
            <person name="Arakawa T."/>
            <person name="Iida J."/>
            <person name="Imamura K."/>
            <person name="Itoh M."/>
            <person name="Kato T."/>
            <person name="Kawaji H."/>
            <person name="Kawagashira N."/>
            <person name="Kawashima T."/>
            <person name="Kojima M."/>
            <person name="Kondo S."/>
            <person name="Konno H."/>
            <person name="Nakano K."/>
            <person name="Ninomiya N."/>
            <person name="Nishio T."/>
            <person name="Okada M."/>
            <person name="Plessy C."/>
            <person name="Shibata K."/>
            <person name="Shiraki T."/>
            <person name="Suzuki S."/>
            <person name="Tagami M."/>
            <person name="Waki K."/>
            <person name="Watahiki A."/>
            <person name="Okamura-Oho Y."/>
            <person name="Suzuki H."/>
            <person name="Kawai J."/>
            <person name="Hayashizaki Y."/>
        </authorList>
    </citation>
    <scope>NUCLEOTIDE SEQUENCE [LARGE SCALE MRNA]</scope>
    <source>
        <strain>C57BL/6J</strain>
    </source>
</reference>
<reference key="3">
    <citation type="journal article" date="2004" name="Genome Res.">
        <title>The status, quality, and expansion of the NIH full-length cDNA project: the Mammalian Gene Collection (MGC).</title>
        <authorList>
            <consortium name="The MGC Project Team"/>
        </authorList>
    </citation>
    <scope>NUCLEOTIDE SEQUENCE [LARGE SCALE MRNA] (ISOFORM 1)</scope>
    <source>
        <strain>FVB/N</strain>
    </source>
</reference>
<reference key="4">
    <citation type="journal article" date="2006" name="Mol. Cell. Proteomics">
        <title>Comprehensive identification of phosphorylation sites in postsynaptic density preparations.</title>
        <authorList>
            <person name="Trinidad J.C."/>
            <person name="Specht C.G."/>
            <person name="Thalhammer A."/>
            <person name="Schoepfer R."/>
            <person name="Burlingame A.L."/>
        </authorList>
    </citation>
    <scope>IDENTIFICATION BY MASS SPECTROMETRY [LARGE SCALE ANALYSIS]</scope>
    <source>
        <tissue>Brain</tissue>
    </source>
</reference>
<reference key="5">
    <citation type="journal article" date="2007" name="Proc. Natl. Acad. Sci. U.S.A.">
        <title>Large-scale phosphorylation analysis of mouse liver.</title>
        <authorList>
            <person name="Villen J."/>
            <person name="Beausoleil S.A."/>
            <person name="Gerber S.A."/>
            <person name="Gygi S.P."/>
        </authorList>
    </citation>
    <scope>IDENTIFICATION BY MASS SPECTROMETRY [LARGE SCALE ANALYSIS]</scope>
    <source>
        <tissue>Liver</tissue>
    </source>
</reference>
<reference key="6">
    <citation type="journal article" date="2009" name="Mol. Cell. Proteomics">
        <title>Large scale localization of protein phosphorylation by use of electron capture dissociation mass spectrometry.</title>
        <authorList>
            <person name="Sweet S.M."/>
            <person name="Bailey C.M."/>
            <person name="Cunningham D.L."/>
            <person name="Heath J.K."/>
            <person name="Cooper H.J."/>
        </authorList>
    </citation>
    <scope>IDENTIFICATION BY MASS SPECTROMETRY [LARGE SCALE ANALYSIS]</scope>
    <source>
        <tissue>Embryonic fibroblast</tissue>
    </source>
</reference>
<reference key="7">
    <citation type="journal article" date="2010" name="Cell">
        <title>A tissue-specific atlas of mouse protein phosphorylation and expression.</title>
        <authorList>
            <person name="Huttlin E.L."/>
            <person name="Jedrychowski M.P."/>
            <person name="Elias J.E."/>
            <person name="Goswami T."/>
            <person name="Rad R."/>
            <person name="Beausoleil S.A."/>
            <person name="Villen J."/>
            <person name="Haas W."/>
            <person name="Sowa M.E."/>
            <person name="Gygi S.P."/>
        </authorList>
    </citation>
    <scope>PHOSPHORYLATION [LARGE SCALE ANALYSIS] AT SER-228</scope>
    <scope>PHOSPHORYLATION [LARGE SCALE ANALYSIS] AT SER-316 (ISOFORM 2)</scope>
    <scope>PHOSPHORYLATION [LARGE SCALE ANALYSIS] AT SER-102; SER-105 AND SER-218 (ISOFORM 3)</scope>
    <scope>IDENTIFICATION BY MASS SPECTROMETRY [LARGE SCALE ANALYSIS]</scope>
    <source>
        <tissue>Brain</tissue>
        <tissue>Brown adipose tissue</tissue>
        <tissue>Heart</tissue>
        <tissue>Kidney</tissue>
        <tissue>Liver</tissue>
        <tissue>Lung</tissue>
        <tissue>Pancreas</tissue>
        <tissue>Spleen</tissue>
        <tissue>Testis</tissue>
    </source>
</reference>
<reference key="8">
    <citation type="journal article" date="2013" name="Mol. Cell">
        <title>SIRT5-mediated lysine desuccinylation impacts diverse metabolic pathways.</title>
        <authorList>
            <person name="Park J."/>
            <person name="Chen Y."/>
            <person name="Tishkoff D.X."/>
            <person name="Peng C."/>
            <person name="Tan M."/>
            <person name="Dai L."/>
            <person name="Xie Z."/>
            <person name="Zhang Y."/>
            <person name="Zwaans B.M."/>
            <person name="Skinner M.E."/>
            <person name="Lombard D.B."/>
            <person name="Zhao Y."/>
        </authorList>
    </citation>
    <scope>ACETYLATION [LARGE SCALE ANALYSIS] AT LYS-89 AND LYS-350</scope>
    <scope>SUCCINYLATION [LARGE SCALE ANALYSIS] AT LYS-89</scope>
    <scope>IDENTIFICATION BY MASS SPECTROMETRY [LARGE SCALE ANALYSIS]</scope>
    <source>
        <tissue>Embryonic fibroblast</tissue>
    </source>
</reference>
<reference key="9">
    <citation type="submission" date="2004-11" db="PDB data bank">
        <title>Solution structure of the PDZ domain of enigma homologue protein.</title>
        <authorList>
            <consortium name="RIKEN structural genomics initiative (RSGI)"/>
        </authorList>
    </citation>
    <scope>STRUCTURE BY NMR OF 5-94</scope>
</reference>
<evidence type="ECO:0000250" key="1">
    <source>
        <dbReference type="UniProtKB" id="Q62920"/>
    </source>
</evidence>
<evidence type="ECO:0000250" key="2">
    <source>
        <dbReference type="UniProtKB" id="Q96HC4"/>
    </source>
</evidence>
<evidence type="ECO:0000255" key="3">
    <source>
        <dbReference type="PROSITE-ProRule" id="PRU00125"/>
    </source>
</evidence>
<evidence type="ECO:0000255" key="4">
    <source>
        <dbReference type="PROSITE-ProRule" id="PRU00143"/>
    </source>
</evidence>
<evidence type="ECO:0000256" key="5">
    <source>
        <dbReference type="SAM" id="MobiDB-lite"/>
    </source>
</evidence>
<evidence type="ECO:0000303" key="6">
    <source>
    </source>
</evidence>
<evidence type="ECO:0000305" key="7"/>
<evidence type="ECO:0000312" key="8">
    <source>
        <dbReference type="MGI" id="MGI:1927489"/>
    </source>
</evidence>
<evidence type="ECO:0007744" key="9">
    <source>
    </source>
</evidence>
<evidence type="ECO:0007744" key="10">
    <source>
    </source>
</evidence>
<evidence type="ECO:0007829" key="11">
    <source>
        <dbReference type="PDB" id="1WF7"/>
    </source>
</evidence>
<comment type="function">
    <text evidence="1">May play an important role in the heart development by scaffolding PKC to the Z-disk region. May play a role in the regulation of cardiomyocyte expansion. Isoforms lacking the LIM domains may negatively modulate the scaffolding activity of isoform 1. Overexpression promotes the development of heart hypertrophy. Contributes to the regulation of dendritic spine morphogenesis in neurons. May be required to restrain postsynaptic growth of excitatory synapses. Isoform 1, but not isoform 2, expression favors spine thinning and elongation.</text>
</comment>
<comment type="subunit">
    <text evidence="1">Interacts with various PKC isoforms through the LIM domains. Interacts with actin and alpha-actinin through the PDZ domain. Interacts (via LIM domains) with SIPA1L1/SPAR; this interaction may occur preferentially with isoform 1.</text>
</comment>
<comment type="subcellular location">
    <subcellularLocation>
        <location evidence="1">Postsynaptic density</location>
    </subcellularLocation>
    <subcellularLocation>
        <location evidence="1">Presynapse</location>
    </subcellularLocation>
    <subcellularLocation>
        <location evidence="1">Postsynapse</location>
    </subcellularLocation>
    <subcellularLocation>
        <location evidence="1">Cytoplasm</location>
        <location evidence="1">Cytosol</location>
    </subcellularLocation>
    <text evidence="1">Detected both at presynaptic and postsynaptic sites, exclusively at excitatory synapses, but not inhibitory synapses, in hippocampal neurons.</text>
</comment>
<comment type="alternative products">
    <event type="alternative splicing"/>
    <isoform>
        <id>Q8CI51-1</id>
        <name>1</name>
        <name>ENH1</name>
        <sequence type="displayed"/>
    </isoform>
    <isoform>
        <id>Q8CI51-2</id>
        <name>2</name>
        <name>ENH2</name>
        <sequence type="described" ref="VSP_010469 VSP_010470"/>
    </isoform>
    <isoform>
        <id>Q8CI51-3</id>
        <name>3</name>
        <name>ENH3</name>
        <sequence type="described" ref="VSP_010467 VSP_010468 VSP_010469 VSP_010470"/>
    </isoform>
</comment>
<keyword id="KW-0002">3D-structure</keyword>
<keyword id="KW-0007">Acetylation</keyword>
<keyword id="KW-0025">Alternative splicing</keyword>
<keyword id="KW-0966">Cell projection</keyword>
<keyword id="KW-0963">Cytoplasm</keyword>
<keyword id="KW-1017">Isopeptide bond</keyword>
<keyword id="KW-0440">LIM domain</keyword>
<keyword id="KW-0479">Metal-binding</keyword>
<keyword id="KW-0597">Phosphoprotein</keyword>
<keyword id="KW-1185">Reference proteome</keyword>
<keyword id="KW-0677">Repeat</keyword>
<keyword id="KW-0770">Synapse</keyword>
<keyword id="KW-0832">Ubl conjugation</keyword>
<keyword id="KW-0862">Zinc</keyword>
<feature type="initiator methionine" description="Removed" evidence="2">
    <location>
        <position position="1"/>
    </location>
</feature>
<feature type="chain" id="PRO_0000075878" description="PDZ and LIM domain protein 5">
    <location>
        <begin position="2"/>
        <end position="591"/>
    </location>
</feature>
<feature type="domain" description="PDZ" evidence="4">
    <location>
        <begin position="2"/>
        <end position="85"/>
    </location>
</feature>
<feature type="domain" description="LIM zinc-binding 1" evidence="3">
    <location>
        <begin position="413"/>
        <end position="472"/>
    </location>
</feature>
<feature type="domain" description="LIM zinc-binding 2" evidence="3">
    <location>
        <begin position="472"/>
        <end position="531"/>
    </location>
</feature>
<feature type="domain" description="LIM zinc-binding 3" evidence="3">
    <location>
        <begin position="531"/>
        <end position="591"/>
    </location>
</feature>
<feature type="region of interest" description="Disordered" evidence="5">
    <location>
        <begin position="121"/>
        <end position="166"/>
    </location>
</feature>
<feature type="region of interest" description="Disordered" evidence="5">
    <location>
        <begin position="186"/>
        <end position="398"/>
    </location>
</feature>
<feature type="compositionally biased region" description="Polar residues" evidence="5">
    <location>
        <begin position="134"/>
        <end position="143"/>
    </location>
</feature>
<feature type="compositionally biased region" description="Low complexity" evidence="5">
    <location>
        <begin position="144"/>
        <end position="166"/>
    </location>
</feature>
<feature type="compositionally biased region" description="Polar residues" evidence="5">
    <location>
        <begin position="186"/>
        <end position="195"/>
    </location>
</feature>
<feature type="compositionally biased region" description="Polar residues" evidence="5">
    <location>
        <begin position="205"/>
        <end position="217"/>
    </location>
</feature>
<feature type="compositionally biased region" description="Basic and acidic residues" evidence="5">
    <location>
        <begin position="258"/>
        <end position="273"/>
    </location>
</feature>
<feature type="compositionally biased region" description="Basic and acidic residues" evidence="5">
    <location>
        <begin position="294"/>
        <end position="304"/>
    </location>
</feature>
<feature type="compositionally biased region" description="Low complexity" evidence="5">
    <location>
        <begin position="310"/>
        <end position="339"/>
    </location>
</feature>
<feature type="compositionally biased region" description="Polar residues" evidence="5">
    <location>
        <begin position="353"/>
        <end position="385"/>
    </location>
</feature>
<feature type="modified residue" description="N-acetylserine" evidence="2">
    <location>
        <position position="2"/>
    </location>
</feature>
<feature type="modified residue" description="Phosphoserine" evidence="1">
    <location>
        <position position="2"/>
    </location>
</feature>
<feature type="modified residue" description="N6-acetyllysine; alternate" evidence="10">
    <location>
        <position position="89"/>
    </location>
</feature>
<feature type="modified residue" description="N6-succinyllysine; alternate" evidence="10">
    <location>
        <position position="89"/>
    </location>
</feature>
<feature type="modified residue" description="Phosphoserine" evidence="2">
    <location>
        <position position="111"/>
    </location>
</feature>
<feature type="modified residue" description="Phosphoserine" evidence="2">
    <location>
        <position position="134"/>
    </location>
</feature>
<feature type="modified residue" description="Phosphoserine" evidence="2">
    <location>
        <position position="137"/>
    </location>
</feature>
<feature type="modified residue" description="Phosphoserine" evidence="9">
    <location>
        <position position="228"/>
    </location>
</feature>
<feature type="modified residue" description="Phosphoserine" evidence="2">
    <location>
        <position position="260"/>
    </location>
</feature>
<feature type="modified residue" description="Phosphoserine" evidence="2">
    <location>
        <position position="313"/>
    </location>
</feature>
<feature type="modified residue" description="Phosphoserine" evidence="1">
    <location>
        <position position="322"/>
    </location>
</feature>
<feature type="modified residue" description="N6-acetyllysine" evidence="10">
    <location>
        <position position="350"/>
    </location>
</feature>
<feature type="modified residue" description="Phosphoserine" evidence="2">
    <location>
        <position position="359"/>
    </location>
</feature>
<feature type="modified residue" description="Phosphoserine" evidence="2">
    <location>
        <position position="361"/>
    </location>
</feature>
<feature type="cross-link" description="Glycyl lysine isopeptide (Lys-Gly) (interchain with G-Cter in SUMO2); alternate" evidence="2">
    <location>
        <position position="89"/>
    </location>
</feature>
<feature type="splice variant" id="VSP_010467" description="In isoform 3." evidence="6">
    <location>
        <begin position="98"/>
        <end position="206"/>
    </location>
</feature>
<feature type="splice variant" id="VSP_010468" description="In isoform 3." evidence="6">
    <original>G</original>
    <variation>GNPGTVKISPKR</variation>
    <location>
        <position position="237"/>
    </location>
</feature>
<feature type="splice variant" id="VSP_010469" description="In isoform 2 and isoform 3." evidence="6">
    <original>NSTQEPSQQPASSGASPLSASEGPESPGSSR</original>
    <variation>KEKIPLHVFSPKYTKLRDWHHEVSARALNVQ</variation>
    <location>
        <begin position="307"/>
        <end position="337"/>
    </location>
</feature>
<feature type="splice variant" id="VSP_010470" description="In isoform 2 and isoform 3." evidence="6">
    <location>
        <begin position="338"/>
        <end position="591"/>
    </location>
</feature>
<feature type="sequence conflict" description="In Ref. 3; AAH37476." evidence="7" ref="3">
    <original>T</original>
    <variation>M</variation>
    <location>
        <position position="74"/>
    </location>
</feature>
<feature type="sequence conflict" description="In Ref. 1; BAA88827/BAA88829." evidence="7" ref="1">
    <original>A</original>
    <variation>T</variation>
    <location>
        <position position="84"/>
    </location>
</feature>
<feature type="sequence conflict" description="In Ref. 1; BAA88827/BAA88829." evidence="7" ref="1">
    <original>E</original>
    <variation>D</variation>
    <location>
        <position position="215"/>
    </location>
</feature>
<feature type="sequence conflict" description="In Ref. 1; BAA88827/BAA88829." evidence="7" ref="1">
    <original>E</original>
    <variation>K</variation>
    <location>
        <position position="222"/>
    </location>
</feature>
<feature type="sequence conflict" description="In Ref. 1; BAA88827/BAA88829." evidence="7" ref="1">
    <original>R</original>
    <variation>K</variation>
    <location>
        <position position="226"/>
    </location>
</feature>
<feature type="sequence conflict" description="In Ref. 1; BAA88827." evidence="7" ref="1">
    <original>G</original>
    <variation>R</variation>
    <location>
        <position position="329"/>
    </location>
</feature>
<feature type="sequence conflict" description="In Ref. 1; BAA88827." evidence="7" ref="1">
    <original>S</original>
    <variation>P</variation>
    <location>
        <position position="433"/>
    </location>
</feature>
<feature type="sequence conflict" description="In Ref. 1; BAA88827." evidence="7" ref="1">
    <original>F</original>
    <variation>Y</variation>
    <location>
        <position position="546"/>
    </location>
</feature>
<feature type="strand" evidence="11">
    <location>
        <begin position="5"/>
        <end position="12"/>
    </location>
</feature>
<feature type="strand" evidence="11">
    <location>
        <begin position="18"/>
        <end position="21"/>
    </location>
</feature>
<feature type="turn" evidence="11">
    <location>
        <begin position="22"/>
        <end position="25"/>
    </location>
</feature>
<feature type="strand" evidence="11">
    <location>
        <begin position="26"/>
        <end position="30"/>
    </location>
</feature>
<feature type="helix" evidence="11">
    <location>
        <begin position="38"/>
        <end position="41"/>
    </location>
</feature>
<feature type="strand" evidence="11">
    <location>
        <begin position="49"/>
        <end position="53"/>
    </location>
</feature>
<feature type="helix" evidence="11">
    <location>
        <begin position="63"/>
        <end position="72"/>
    </location>
</feature>
<feature type="strand" evidence="11">
    <location>
        <begin position="74"/>
        <end position="81"/>
    </location>
</feature>
<feature type="modified residue" description="Phosphoserine" evidence="9">
    <location sequence="Q8CI51-2">
        <position position="316"/>
    </location>
</feature>
<feature type="modified residue" description="Phosphoserine" evidence="9">
    <location sequence="Q8CI51-3">
        <position position="102"/>
    </location>
</feature>
<feature type="modified residue" description="Phosphoserine" evidence="9">
    <location sequence="Q8CI51-3">
        <position position="105"/>
    </location>
</feature>
<feature type="modified residue" description="Phosphoserine" evidence="9">
    <location sequence="Q8CI51-3">
        <position position="218"/>
    </location>
</feature>
<name>PDLI5_MOUSE</name>
<protein>
    <recommendedName>
        <fullName evidence="7">PDZ and LIM domain protein 5</fullName>
    </recommendedName>
    <alternativeName>
        <fullName evidence="6">Enigma homolog</fullName>
    </alternativeName>
    <alternativeName>
        <fullName evidence="6">Enigma-like PDZ and LIM domains protein</fullName>
    </alternativeName>
</protein>
<sequence>MSNYSVSLVGPAPWGFRLQGGKDFNMPLTISSLKDGGKASQAHVRIGDVVLSIDGISAQGMTHLEAQNKIKACTGSLNMTLQRASAAAKSEPVSVQKGEPKEVVKPVPITSPAVSKVTSTTNMAYNKAPRPFGSVSSPKVTSIPSPSSAFTPAHAATSSHASPTPVAAATPLHLSASGLHVSANLSADQCSSPPNTGKPAVNVPRQPTVTSVCSESAQELAEGQRRGSQGDIKQQNGPPRKHIVERNTEFYHIPTHSDASKKRLIEDTEDWRPRTGTTQSRSFRILAQITGTEHLTESENDNTKKANSTQEPSQQPASSGASPLSASEGPESPGSSRPSVAGLRSAAAFKPVGSTSVKSPSWQRPNQAAPSTGRISNNARSSGTGASVGPPQPSDQDTLVQRAEHIPAGKRTPMCAHCNQVIRGPFLVALGKSWHPEEFNCAHCKNTMAYIGFVEEKGALYCELCYEKFFAPECGRCQRKILGEVINALKQTWHVSCFVCVACGKPIRNNVFHLEDGEPYCETDYYALFGTICRGCEFPIEAGDMFLEALGYTWHDTCFVCSVCCESLEGQTFFSKKDKPLCKKHAHSVNF</sequence>
<proteinExistence type="evidence at protein level"/>